<organism>
    <name type="scientific">Escherichia coli O17:K52:H18 (strain UMN026 / ExPEC)</name>
    <dbReference type="NCBI Taxonomy" id="585056"/>
    <lineage>
        <taxon>Bacteria</taxon>
        <taxon>Pseudomonadati</taxon>
        <taxon>Pseudomonadota</taxon>
        <taxon>Gammaproteobacteria</taxon>
        <taxon>Enterobacterales</taxon>
        <taxon>Enterobacteriaceae</taxon>
        <taxon>Escherichia</taxon>
    </lineage>
</organism>
<gene>
    <name evidence="1" type="primary">guaC</name>
    <name type="ordered locus">ECUMN_0102</name>
</gene>
<proteinExistence type="inferred from homology"/>
<sequence length="347" mass="37369">MRIEEDLKLGFKDVLIRPKRSTLKSRSDVELERQFTFKHSGQSWSGVPIIAANMDTVGTFSMASALASFDILTAVHKHYSVEEWQAFINNSSADVLKHVMVSTGTSDADFEKTKQILDLNPALNFVCIDVANGYSEHFVQFVAKAREAWPTKTICAGNVVTGEMCEELILSGADIVKVGIGPGSVCTTRVKTGVGYPQLSAVIECADAAHGLGGMIVSDGGCTTPGDVAKAFGGGADFVMLGGMLAGHEESGGRIVEENGEKFMLFYGMSSESAMKRHVGGVAEYRAAEGKTVKLPLRGPVENTARDILGGLRSACTYVGASRLKELTKRTTFIRVLEQENRIFNNL</sequence>
<evidence type="ECO:0000255" key="1">
    <source>
        <dbReference type="HAMAP-Rule" id="MF_00596"/>
    </source>
</evidence>
<keyword id="KW-0479">Metal-binding</keyword>
<keyword id="KW-0521">NADP</keyword>
<keyword id="KW-0560">Oxidoreductase</keyword>
<keyword id="KW-0630">Potassium</keyword>
<comment type="function">
    <text evidence="1">Catalyzes the irreversible NADPH-dependent deamination of GMP to IMP. It functions in the conversion of nucleobase, nucleoside and nucleotide derivatives of G to A nucleotides, and in maintaining the intracellular balance of A and G nucleotides.</text>
</comment>
<comment type="catalytic activity">
    <reaction evidence="1">
        <text>IMP + NH4(+) + NADP(+) = GMP + NADPH + 2 H(+)</text>
        <dbReference type="Rhea" id="RHEA:17185"/>
        <dbReference type="ChEBI" id="CHEBI:15378"/>
        <dbReference type="ChEBI" id="CHEBI:28938"/>
        <dbReference type="ChEBI" id="CHEBI:57783"/>
        <dbReference type="ChEBI" id="CHEBI:58053"/>
        <dbReference type="ChEBI" id="CHEBI:58115"/>
        <dbReference type="ChEBI" id="CHEBI:58349"/>
        <dbReference type="EC" id="1.7.1.7"/>
    </reaction>
</comment>
<comment type="subunit">
    <text evidence="1">Homotetramer.</text>
</comment>
<comment type="similarity">
    <text evidence="1">Belongs to the IMPDH/GMPR family. GuaC type 1 subfamily.</text>
</comment>
<accession>B7N7X5</accession>
<reference key="1">
    <citation type="journal article" date="2009" name="PLoS Genet.">
        <title>Organised genome dynamics in the Escherichia coli species results in highly diverse adaptive paths.</title>
        <authorList>
            <person name="Touchon M."/>
            <person name="Hoede C."/>
            <person name="Tenaillon O."/>
            <person name="Barbe V."/>
            <person name="Baeriswyl S."/>
            <person name="Bidet P."/>
            <person name="Bingen E."/>
            <person name="Bonacorsi S."/>
            <person name="Bouchier C."/>
            <person name="Bouvet O."/>
            <person name="Calteau A."/>
            <person name="Chiapello H."/>
            <person name="Clermont O."/>
            <person name="Cruveiller S."/>
            <person name="Danchin A."/>
            <person name="Diard M."/>
            <person name="Dossat C."/>
            <person name="Karoui M.E."/>
            <person name="Frapy E."/>
            <person name="Garry L."/>
            <person name="Ghigo J.M."/>
            <person name="Gilles A.M."/>
            <person name="Johnson J."/>
            <person name="Le Bouguenec C."/>
            <person name="Lescat M."/>
            <person name="Mangenot S."/>
            <person name="Martinez-Jehanne V."/>
            <person name="Matic I."/>
            <person name="Nassif X."/>
            <person name="Oztas S."/>
            <person name="Petit M.A."/>
            <person name="Pichon C."/>
            <person name="Rouy Z."/>
            <person name="Ruf C.S."/>
            <person name="Schneider D."/>
            <person name="Tourret J."/>
            <person name="Vacherie B."/>
            <person name="Vallenet D."/>
            <person name="Medigue C."/>
            <person name="Rocha E.P.C."/>
            <person name="Denamur E."/>
        </authorList>
    </citation>
    <scope>NUCLEOTIDE SEQUENCE [LARGE SCALE GENOMIC DNA]</scope>
    <source>
        <strain>UMN026 / ExPEC</strain>
    </source>
</reference>
<name>GUAC_ECOLU</name>
<dbReference type="EC" id="1.7.1.7" evidence="1"/>
<dbReference type="EMBL" id="CU928163">
    <property type="protein sequence ID" value="CAR11325.1"/>
    <property type="molecule type" value="Genomic_DNA"/>
</dbReference>
<dbReference type="RefSeq" id="WP_001217337.1">
    <property type="nucleotide sequence ID" value="NC_011751.1"/>
</dbReference>
<dbReference type="RefSeq" id="YP_002410881.1">
    <property type="nucleotide sequence ID" value="NC_011751.1"/>
</dbReference>
<dbReference type="SMR" id="B7N7X5"/>
<dbReference type="STRING" id="585056.ECUMN_0102"/>
<dbReference type="KEGG" id="eum:ECUMN_0102"/>
<dbReference type="PATRIC" id="fig|585056.7.peg.294"/>
<dbReference type="HOGENOM" id="CLU_022552_5_3_6"/>
<dbReference type="Proteomes" id="UP000007097">
    <property type="component" value="Chromosome"/>
</dbReference>
<dbReference type="GO" id="GO:0005829">
    <property type="term" value="C:cytosol"/>
    <property type="evidence" value="ECO:0007669"/>
    <property type="project" value="TreeGrafter"/>
</dbReference>
<dbReference type="GO" id="GO:1902560">
    <property type="term" value="C:GMP reductase complex"/>
    <property type="evidence" value="ECO:0007669"/>
    <property type="project" value="InterPro"/>
</dbReference>
<dbReference type="GO" id="GO:0003920">
    <property type="term" value="F:GMP reductase activity"/>
    <property type="evidence" value="ECO:0007669"/>
    <property type="project" value="UniProtKB-UniRule"/>
</dbReference>
<dbReference type="GO" id="GO:0046872">
    <property type="term" value="F:metal ion binding"/>
    <property type="evidence" value="ECO:0007669"/>
    <property type="project" value="UniProtKB-KW"/>
</dbReference>
<dbReference type="GO" id="GO:0006163">
    <property type="term" value="P:purine nucleotide metabolic process"/>
    <property type="evidence" value="ECO:0007669"/>
    <property type="project" value="UniProtKB-UniRule"/>
</dbReference>
<dbReference type="CDD" id="cd00381">
    <property type="entry name" value="IMPDH"/>
    <property type="match status" value="1"/>
</dbReference>
<dbReference type="FunFam" id="3.20.20.70:FF:000012">
    <property type="entry name" value="GMP reductase"/>
    <property type="match status" value="1"/>
</dbReference>
<dbReference type="Gene3D" id="3.20.20.70">
    <property type="entry name" value="Aldolase class I"/>
    <property type="match status" value="1"/>
</dbReference>
<dbReference type="HAMAP" id="MF_00596">
    <property type="entry name" value="GMP_reduct_type1"/>
    <property type="match status" value="1"/>
</dbReference>
<dbReference type="InterPro" id="IPR013785">
    <property type="entry name" value="Aldolase_TIM"/>
</dbReference>
<dbReference type="InterPro" id="IPR050139">
    <property type="entry name" value="GMP_reductase"/>
</dbReference>
<dbReference type="InterPro" id="IPR005993">
    <property type="entry name" value="GMPR"/>
</dbReference>
<dbReference type="InterPro" id="IPR015875">
    <property type="entry name" value="IMP_DH/GMP_Rdtase_CS"/>
</dbReference>
<dbReference type="InterPro" id="IPR001093">
    <property type="entry name" value="IMP_DH_GMPRt"/>
</dbReference>
<dbReference type="NCBIfam" id="TIGR01305">
    <property type="entry name" value="GMP_reduct_1"/>
    <property type="match status" value="1"/>
</dbReference>
<dbReference type="NCBIfam" id="NF003470">
    <property type="entry name" value="PRK05096.1"/>
    <property type="match status" value="1"/>
</dbReference>
<dbReference type="PANTHER" id="PTHR43170">
    <property type="entry name" value="GMP REDUCTASE"/>
    <property type="match status" value="1"/>
</dbReference>
<dbReference type="PANTHER" id="PTHR43170:SF5">
    <property type="entry name" value="GMP REDUCTASE"/>
    <property type="match status" value="1"/>
</dbReference>
<dbReference type="Pfam" id="PF00478">
    <property type="entry name" value="IMPDH"/>
    <property type="match status" value="1"/>
</dbReference>
<dbReference type="PIRSF" id="PIRSF000235">
    <property type="entry name" value="GMP_reductase"/>
    <property type="match status" value="1"/>
</dbReference>
<dbReference type="SMART" id="SM01240">
    <property type="entry name" value="IMPDH"/>
    <property type="match status" value="1"/>
</dbReference>
<dbReference type="SUPFAM" id="SSF51412">
    <property type="entry name" value="Inosine monophosphate dehydrogenase (IMPDH)"/>
    <property type="match status" value="1"/>
</dbReference>
<dbReference type="PROSITE" id="PS00487">
    <property type="entry name" value="IMP_DH_GMP_RED"/>
    <property type="match status" value="1"/>
</dbReference>
<feature type="chain" id="PRO_1000129855" description="GMP reductase">
    <location>
        <begin position="1"/>
        <end position="347"/>
    </location>
</feature>
<feature type="active site" description="Thioimidate intermediate" evidence="1">
    <location>
        <position position="186"/>
    </location>
</feature>
<feature type="binding site" evidence="1">
    <location>
        <begin position="108"/>
        <end position="131"/>
    </location>
    <ligand>
        <name>NADP(+)</name>
        <dbReference type="ChEBI" id="CHEBI:58349"/>
    </ligand>
</feature>
<feature type="binding site" evidence="1">
    <location>
        <position position="181"/>
    </location>
    <ligand>
        <name>K(+)</name>
        <dbReference type="ChEBI" id="CHEBI:29103"/>
    </ligand>
</feature>
<feature type="binding site" evidence="1">
    <location>
        <position position="183"/>
    </location>
    <ligand>
        <name>K(+)</name>
        <dbReference type="ChEBI" id="CHEBI:29103"/>
    </ligand>
</feature>
<feature type="binding site" evidence="1">
    <location>
        <begin position="216"/>
        <end position="239"/>
    </location>
    <ligand>
        <name>NADP(+)</name>
        <dbReference type="ChEBI" id="CHEBI:58349"/>
    </ligand>
</feature>
<protein>
    <recommendedName>
        <fullName evidence="1">GMP reductase</fullName>
        <ecNumber evidence="1">1.7.1.7</ecNumber>
    </recommendedName>
    <alternativeName>
        <fullName evidence="1">Guanosine 5'-monophosphate oxidoreductase</fullName>
        <shortName evidence="1">Guanosine monophosphate reductase</shortName>
    </alternativeName>
</protein>